<evidence type="ECO:0000255" key="1">
    <source>
        <dbReference type="HAMAP-Rule" id="MF_00945"/>
    </source>
</evidence>
<evidence type="ECO:0000256" key="2">
    <source>
        <dbReference type="SAM" id="MobiDB-lite"/>
    </source>
</evidence>
<accession>Q58447</accession>
<organism>
    <name type="scientific">Methanocaldococcus jannaschii (strain ATCC 43067 / DSM 2661 / JAL-1 / JCM 10045 / NBRC 100440)</name>
    <name type="common">Methanococcus jannaschii</name>
    <dbReference type="NCBI Taxonomy" id="243232"/>
    <lineage>
        <taxon>Archaea</taxon>
        <taxon>Methanobacteriati</taxon>
        <taxon>Methanobacteriota</taxon>
        <taxon>Methanomada group</taxon>
        <taxon>Methanococci</taxon>
        <taxon>Methanococcales</taxon>
        <taxon>Methanocaldococcaceae</taxon>
        <taxon>Methanocaldococcus</taxon>
    </lineage>
</organism>
<proteinExistence type="inferred from homology"/>
<sequence length="183" mass="21135">MAKVRLTTEEIMKIGFFEKIANVPILDCVLNDERVAFIVKEGDVGAAIGKGGENVKTAEEKFGKKVDIIEYSDDWRKFIRNIFAPIQLDDVWVKRVGKDVVAFIKINPKVRRAVFGEKGKNLERALKILKRHTKITKIKVIVENQKFKRKRAKRPVVKDQQQEQTETKQETDVQQDVKETVKE</sequence>
<keyword id="KW-0963">Cytoplasm</keyword>
<keyword id="KW-1185">Reference proteome</keyword>
<keyword id="KW-0694">RNA-binding</keyword>
<keyword id="KW-0804">Transcription</keyword>
<keyword id="KW-0805">Transcription regulation</keyword>
<keyword id="KW-0806">Transcription termination</keyword>
<dbReference type="EMBL" id="L77117">
    <property type="protein sequence ID" value="AAB99049.1"/>
    <property type="molecule type" value="Genomic_DNA"/>
</dbReference>
<dbReference type="PIR" id="D64430">
    <property type="entry name" value="D64430"/>
</dbReference>
<dbReference type="RefSeq" id="WP_010870558.1">
    <property type="nucleotide sequence ID" value="NC_000909.1"/>
</dbReference>
<dbReference type="SMR" id="Q58447"/>
<dbReference type="FunCoup" id="Q58447">
    <property type="interactions" value="6"/>
</dbReference>
<dbReference type="STRING" id="243232.MJ_1045"/>
<dbReference type="PaxDb" id="243232-MJ_1045"/>
<dbReference type="EnsemblBacteria" id="AAB99049">
    <property type="protein sequence ID" value="AAB99049"/>
    <property type="gene ID" value="MJ_1045"/>
</dbReference>
<dbReference type="GeneID" id="1451942"/>
<dbReference type="KEGG" id="mja:MJ_1045"/>
<dbReference type="eggNOG" id="arCOG01760">
    <property type="taxonomic scope" value="Archaea"/>
</dbReference>
<dbReference type="HOGENOM" id="CLU_131906_1_0_2"/>
<dbReference type="InParanoid" id="Q58447"/>
<dbReference type="OrthoDB" id="4116at2157"/>
<dbReference type="PhylomeDB" id="Q58447"/>
<dbReference type="Proteomes" id="UP000000805">
    <property type="component" value="Chromosome"/>
</dbReference>
<dbReference type="GO" id="GO:0005829">
    <property type="term" value="C:cytosol"/>
    <property type="evidence" value="ECO:0000318"/>
    <property type="project" value="GO_Central"/>
</dbReference>
<dbReference type="GO" id="GO:0003723">
    <property type="term" value="F:RNA binding"/>
    <property type="evidence" value="ECO:0007669"/>
    <property type="project" value="UniProtKB-KW"/>
</dbReference>
<dbReference type="GO" id="GO:0006353">
    <property type="term" value="P:DNA-templated transcription termination"/>
    <property type="evidence" value="ECO:0007669"/>
    <property type="project" value="UniProtKB-UniRule"/>
</dbReference>
<dbReference type="GO" id="GO:0031564">
    <property type="term" value="P:transcription antitermination"/>
    <property type="evidence" value="ECO:0000318"/>
    <property type="project" value="GO_Central"/>
</dbReference>
<dbReference type="CDD" id="cd22531">
    <property type="entry name" value="KH-II_NusA_arch_rpt2"/>
    <property type="match status" value="1"/>
</dbReference>
<dbReference type="Gene3D" id="3.30.300.20">
    <property type="match status" value="2"/>
</dbReference>
<dbReference type="HAMAP" id="MF_00945_A">
    <property type="entry name" value="NusA_A"/>
    <property type="match status" value="1"/>
</dbReference>
<dbReference type="InterPro" id="IPR004087">
    <property type="entry name" value="KH_dom"/>
</dbReference>
<dbReference type="InterPro" id="IPR015946">
    <property type="entry name" value="KH_dom-like_a/b"/>
</dbReference>
<dbReference type="InterPro" id="IPR025249">
    <property type="entry name" value="KH_dom_NusA-like"/>
</dbReference>
<dbReference type="InterPro" id="IPR009019">
    <property type="entry name" value="KH_sf_prok-type"/>
</dbReference>
<dbReference type="InterPro" id="IPR010212">
    <property type="entry name" value="NusA_arc"/>
</dbReference>
<dbReference type="InterPro" id="IPR030842">
    <property type="entry name" value="NusA_bac"/>
</dbReference>
<dbReference type="NCBIfam" id="TIGR01952">
    <property type="entry name" value="nusA_arch"/>
    <property type="match status" value="1"/>
</dbReference>
<dbReference type="NCBIfam" id="NF006261">
    <property type="entry name" value="PRK08406.1-5"/>
    <property type="match status" value="1"/>
</dbReference>
<dbReference type="PANTHER" id="PTHR22648">
    <property type="entry name" value="TRANSCRIPTION TERMINATION FACTOR NUSA"/>
    <property type="match status" value="1"/>
</dbReference>
<dbReference type="PANTHER" id="PTHR22648:SF0">
    <property type="entry name" value="TRANSCRIPTION TERMINATION_ANTITERMINATION PROTEIN NUSA"/>
    <property type="match status" value="1"/>
</dbReference>
<dbReference type="Pfam" id="PF13184">
    <property type="entry name" value="KH_5"/>
    <property type="match status" value="1"/>
</dbReference>
<dbReference type="SMART" id="SM00322">
    <property type="entry name" value="KH"/>
    <property type="match status" value="1"/>
</dbReference>
<dbReference type="SUPFAM" id="SSF54814">
    <property type="entry name" value="Prokaryotic type KH domain (KH-domain type II)"/>
    <property type="match status" value="2"/>
</dbReference>
<dbReference type="PROSITE" id="PS50084">
    <property type="entry name" value="KH_TYPE_1"/>
    <property type="match status" value="1"/>
</dbReference>
<protein>
    <recommendedName>
        <fullName evidence="1">Probable transcription termination protein NusA</fullName>
    </recommendedName>
</protein>
<gene>
    <name evidence="1" type="primary">nusA</name>
    <name type="ordered locus">MJ1045</name>
</gene>
<name>NUSA_METJA</name>
<reference key="1">
    <citation type="journal article" date="1996" name="Science">
        <title>Complete genome sequence of the methanogenic archaeon, Methanococcus jannaschii.</title>
        <authorList>
            <person name="Bult C.J."/>
            <person name="White O."/>
            <person name="Olsen G.J."/>
            <person name="Zhou L."/>
            <person name="Fleischmann R.D."/>
            <person name="Sutton G.G."/>
            <person name="Blake J.A."/>
            <person name="FitzGerald L.M."/>
            <person name="Clayton R.A."/>
            <person name="Gocayne J.D."/>
            <person name="Kerlavage A.R."/>
            <person name="Dougherty B.A."/>
            <person name="Tomb J.-F."/>
            <person name="Adams M.D."/>
            <person name="Reich C.I."/>
            <person name="Overbeek R."/>
            <person name="Kirkness E.F."/>
            <person name="Weinstock K.G."/>
            <person name="Merrick J.M."/>
            <person name="Glodek A."/>
            <person name="Scott J.L."/>
            <person name="Geoghagen N.S.M."/>
            <person name="Weidman J.F."/>
            <person name="Fuhrmann J.L."/>
            <person name="Nguyen D."/>
            <person name="Utterback T.R."/>
            <person name="Kelley J.M."/>
            <person name="Peterson J.D."/>
            <person name="Sadow P.W."/>
            <person name="Hanna M.C."/>
            <person name="Cotton M.D."/>
            <person name="Roberts K.M."/>
            <person name="Hurst M.A."/>
            <person name="Kaine B.P."/>
            <person name="Borodovsky M."/>
            <person name="Klenk H.-P."/>
            <person name="Fraser C.M."/>
            <person name="Smith H.O."/>
            <person name="Woese C.R."/>
            <person name="Venter J.C."/>
        </authorList>
    </citation>
    <scope>NUCLEOTIDE SEQUENCE [LARGE SCALE GENOMIC DNA]</scope>
    <source>
        <strain>ATCC 43067 / DSM 2661 / JAL-1 / JCM 10045 / NBRC 100440</strain>
    </source>
</reference>
<feature type="chain" id="PRO_0000181983" description="Probable transcription termination protein NusA">
    <location>
        <begin position="1"/>
        <end position="183"/>
    </location>
</feature>
<feature type="domain" description="KH" evidence="1">
    <location>
        <begin position="32"/>
        <end position="98"/>
    </location>
</feature>
<feature type="region of interest" description="Disordered" evidence="2">
    <location>
        <begin position="149"/>
        <end position="183"/>
    </location>
</feature>
<feature type="compositionally biased region" description="Basic and acidic residues" evidence="2">
    <location>
        <begin position="156"/>
        <end position="183"/>
    </location>
</feature>
<comment type="function">
    <text evidence="1">Participates in transcription termination.</text>
</comment>
<comment type="subcellular location">
    <subcellularLocation>
        <location evidence="1">Cytoplasm</location>
    </subcellularLocation>
</comment>
<comment type="similarity">
    <text evidence="1">Belongs to the NusA family.</text>
</comment>